<gene>
    <name evidence="1" type="primary">ureB</name>
    <name type="ordered locus">Lcho_1077</name>
</gene>
<name>URE2_LEPCP</name>
<comment type="catalytic activity">
    <reaction evidence="1">
        <text>urea + 2 H2O + H(+) = hydrogencarbonate + 2 NH4(+)</text>
        <dbReference type="Rhea" id="RHEA:20557"/>
        <dbReference type="ChEBI" id="CHEBI:15377"/>
        <dbReference type="ChEBI" id="CHEBI:15378"/>
        <dbReference type="ChEBI" id="CHEBI:16199"/>
        <dbReference type="ChEBI" id="CHEBI:17544"/>
        <dbReference type="ChEBI" id="CHEBI:28938"/>
        <dbReference type="EC" id="3.5.1.5"/>
    </reaction>
</comment>
<comment type="pathway">
    <text evidence="1">Nitrogen metabolism; urea degradation; CO(2) and NH(3) from urea (urease route): step 1/1.</text>
</comment>
<comment type="subunit">
    <text evidence="1">Heterotrimer of UreA (gamma), UreB (beta) and UreC (alpha) subunits. Three heterotrimers associate to form the active enzyme.</text>
</comment>
<comment type="subcellular location">
    <subcellularLocation>
        <location evidence="1">Cytoplasm</location>
    </subcellularLocation>
</comment>
<comment type="similarity">
    <text evidence="1">Belongs to the urease beta subunit family.</text>
</comment>
<accession>B1Y3V2</accession>
<organism>
    <name type="scientific">Leptothrix cholodnii (strain ATCC 51168 / LMG 8142 / SP-6)</name>
    <name type="common">Leptothrix discophora (strain SP-6)</name>
    <dbReference type="NCBI Taxonomy" id="395495"/>
    <lineage>
        <taxon>Bacteria</taxon>
        <taxon>Pseudomonadati</taxon>
        <taxon>Pseudomonadota</taxon>
        <taxon>Betaproteobacteria</taxon>
        <taxon>Burkholderiales</taxon>
        <taxon>Sphaerotilaceae</taxon>
        <taxon>Leptothrix</taxon>
    </lineage>
</organism>
<proteinExistence type="inferred from homology"/>
<protein>
    <recommendedName>
        <fullName evidence="1">Urease subunit beta</fullName>
        <ecNumber evidence="1">3.5.1.5</ecNumber>
    </recommendedName>
    <alternativeName>
        <fullName evidence="1">Urea amidohydrolase subunit beta</fullName>
    </alternativeName>
</protein>
<keyword id="KW-0963">Cytoplasm</keyword>
<keyword id="KW-0378">Hydrolase</keyword>
<keyword id="KW-1185">Reference proteome</keyword>
<sequence>MTPGELLTDGADLVINSGRRTLTLVVENASDRPIQVGSHYHFAETNAGLSFDRAAARGMRLNIASGTAVRFEPGQQRTIELVDLAGDRQVWGFRGLVQGRL</sequence>
<feature type="chain" id="PRO_1000188927" description="Urease subunit beta">
    <location>
        <begin position="1"/>
        <end position="101"/>
    </location>
</feature>
<evidence type="ECO:0000255" key="1">
    <source>
        <dbReference type="HAMAP-Rule" id="MF_01954"/>
    </source>
</evidence>
<reference key="1">
    <citation type="submission" date="2008-03" db="EMBL/GenBank/DDBJ databases">
        <title>Complete sequence of Leptothrix cholodnii SP-6.</title>
        <authorList>
            <consortium name="US DOE Joint Genome Institute"/>
            <person name="Copeland A."/>
            <person name="Lucas S."/>
            <person name="Lapidus A."/>
            <person name="Glavina del Rio T."/>
            <person name="Dalin E."/>
            <person name="Tice H."/>
            <person name="Bruce D."/>
            <person name="Goodwin L."/>
            <person name="Pitluck S."/>
            <person name="Chertkov O."/>
            <person name="Brettin T."/>
            <person name="Detter J.C."/>
            <person name="Han C."/>
            <person name="Kuske C.R."/>
            <person name="Schmutz J."/>
            <person name="Larimer F."/>
            <person name="Land M."/>
            <person name="Hauser L."/>
            <person name="Kyrpides N."/>
            <person name="Lykidis A."/>
            <person name="Emerson D."/>
            <person name="Richardson P."/>
        </authorList>
    </citation>
    <scope>NUCLEOTIDE SEQUENCE [LARGE SCALE GENOMIC DNA]</scope>
    <source>
        <strain>ATCC 51168 / LMG 8142 / SP-6</strain>
    </source>
</reference>
<dbReference type="EC" id="3.5.1.5" evidence="1"/>
<dbReference type="EMBL" id="CP001013">
    <property type="protein sequence ID" value="ACB33346.1"/>
    <property type="molecule type" value="Genomic_DNA"/>
</dbReference>
<dbReference type="RefSeq" id="WP_012346108.1">
    <property type="nucleotide sequence ID" value="NC_010524.1"/>
</dbReference>
<dbReference type="SMR" id="B1Y3V2"/>
<dbReference type="STRING" id="395495.Lcho_1077"/>
<dbReference type="KEGG" id="lch:Lcho_1077"/>
<dbReference type="eggNOG" id="COG0832">
    <property type="taxonomic scope" value="Bacteria"/>
</dbReference>
<dbReference type="HOGENOM" id="CLU_129707_1_1_4"/>
<dbReference type="OrthoDB" id="9797217at2"/>
<dbReference type="UniPathway" id="UPA00258">
    <property type="reaction ID" value="UER00370"/>
</dbReference>
<dbReference type="Proteomes" id="UP000001693">
    <property type="component" value="Chromosome"/>
</dbReference>
<dbReference type="GO" id="GO:0035550">
    <property type="term" value="C:urease complex"/>
    <property type="evidence" value="ECO:0007669"/>
    <property type="project" value="InterPro"/>
</dbReference>
<dbReference type="GO" id="GO:0009039">
    <property type="term" value="F:urease activity"/>
    <property type="evidence" value="ECO:0007669"/>
    <property type="project" value="UniProtKB-UniRule"/>
</dbReference>
<dbReference type="GO" id="GO:0043419">
    <property type="term" value="P:urea catabolic process"/>
    <property type="evidence" value="ECO:0007669"/>
    <property type="project" value="UniProtKB-UniRule"/>
</dbReference>
<dbReference type="CDD" id="cd00407">
    <property type="entry name" value="Urease_beta"/>
    <property type="match status" value="1"/>
</dbReference>
<dbReference type="FunFam" id="2.10.150.10:FF:000001">
    <property type="entry name" value="Urease subunit beta"/>
    <property type="match status" value="1"/>
</dbReference>
<dbReference type="Gene3D" id="2.10.150.10">
    <property type="entry name" value="Urease, beta subunit"/>
    <property type="match status" value="1"/>
</dbReference>
<dbReference type="HAMAP" id="MF_01954">
    <property type="entry name" value="Urease_beta"/>
    <property type="match status" value="1"/>
</dbReference>
<dbReference type="InterPro" id="IPR002019">
    <property type="entry name" value="Urease_beta-like"/>
</dbReference>
<dbReference type="InterPro" id="IPR036461">
    <property type="entry name" value="Urease_betasu_sf"/>
</dbReference>
<dbReference type="InterPro" id="IPR050069">
    <property type="entry name" value="Urease_subunit"/>
</dbReference>
<dbReference type="NCBIfam" id="NF009682">
    <property type="entry name" value="PRK13203.1"/>
    <property type="match status" value="1"/>
</dbReference>
<dbReference type="NCBIfam" id="TIGR00192">
    <property type="entry name" value="urease_beta"/>
    <property type="match status" value="1"/>
</dbReference>
<dbReference type="PANTHER" id="PTHR33569">
    <property type="entry name" value="UREASE"/>
    <property type="match status" value="1"/>
</dbReference>
<dbReference type="PANTHER" id="PTHR33569:SF1">
    <property type="entry name" value="UREASE"/>
    <property type="match status" value="1"/>
</dbReference>
<dbReference type="Pfam" id="PF00699">
    <property type="entry name" value="Urease_beta"/>
    <property type="match status" value="1"/>
</dbReference>
<dbReference type="SUPFAM" id="SSF51278">
    <property type="entry name" value="Urease, beta-subunit"/>
    <property type="match status" value="1"/>
</dbReference>